<feature type="chain" id="PRO_0000256480" description="1-deoxy-D-xylulose-5-phosphate synthase">
    <location>
        <begin position="1"/>
        <end position="649"/>
    </location>
</feature>
<feature type="binding site" evidence="1">
    <location>
        <position position="84"/>
    </location>
    <ligand>
        <name>thiamine diphosphate</name>
        <dbReference type="ChEBI" id="CHEBI:58937"/>
    </ligand>
</feature>
<feature type="binding site" evidence="1">
    <location>
        <begin position="125"/>
        <end position="127"/>
    </location>
    <ligand>
        <name>thiamine diphosphate</name>
        <dbReference type="ChEBI" id="CHEBI:58937"/>
    </ligand>
</feature>
<feature type="binding site" evidence="1">
    <location>
        <position position="156"/>
    </location>
    <ligand>
        <name>Mg(2+)</name>
        <dbReference type="ChEBI" id="CHEBI:18420"/>
    </ligand>
</feature>
<feature type="binding site" evidence="1">
    <location>
        <begin position="157"/>
        <end position="158"/>
    </location>
    <ligand>
        <name>thiamine diphosphate</name>
        <dbReference type="ChEBI" id="CHEBI:58937"/>
    </ligand>
</feature>
<feature type="binding site" evidence="1">
    <location>
        <position position="185"/>
    </location>
    <ligand>
        <name>Mg(2+)</name>
        <dbReference type="ChEBI" id="CHEBI:18420"/>
    </ligand>
</feature>
<feature type="binding site" evidence="1">
    <location>
        <position position="185"/>
    </location>
    <ligand>
        <name>thiamine diphosphate</name>
        <dbReference type="ChEBI" id="CHEBI:58937"/>
    </ligand>
</feature>
<feature type="binding site" evidence="1">
    <location>
        <position position="292"/>
    </location>
    <ligand>
        <name>thiamine diphosphate</name>
        <dbReference type="ChEBI" id="CHEBI:58937"/>
    </ligand>
</feature>
<feature type="binding site" evidence="1">
    <location>
        <position position="385"/>
    </location>
    <ligand>
        <name>thiamine diphosphate</name>
        <dbReference type="ChEBI" id="CHEBI:58937"/>
    </ligand>
</feature>
<organism>
    <name type="scientific">Saccharophagus degradans (strain 2-40 / ATCC 43961 / DSM 17024)</name>
    <dbReference type="NCBI Taxonomy" id="203122"/>
    <lineage>
        <taxon>Bacteria</taxon>
        <taxon>Pseudomonadati</taxon>
        <taxon>Pseudomonadota</taxon>
        <taxon>Gammaproteobacteria</taxon>
        <taxon>Cellvibrionales</taxon>
        <taxon>Cellvibrionaceae</taxon>
        <taxon>Saccharophagus</taxon>
    </lineage>
</organism>
<evidence type="ECO:0000255" key="1">
    <source>
        <dbReference type="HAMAP-Rule" id="MF_00315"/>
    </source>
</evidence>
<accession>Q21F93</accession>
<name>DXS_SACD2</name>
<reference key="1">
    <citation type="journal article" date="2008" name="PLoS Genet.">
        <title>Complete genome sequence of the complex carbohydrate-degrading marine bacterium, Saccharophagus degradans strain 2-40 T.</title>
        <authorList>
            <person name="Weiner R.M."/>
            <person name="Taylor L.E. II"/>
            <person name="Henrissat B."/>
            <person name="Hauser L."/>
            <person name="Land M."/>
            <person name="Coutinho P.M."/>
            <person name="Rancurel C."/>
            <person name="Saunders E.H."/>
            <person name="Longmire A.G."/>
            <person name="Zhang H."/>
            <person name="Bayer E.A."/>
            <person name="Gilbert H.J."/>
            <person name="Larimer F."/>
            <person name="Zhulin I.B."/>
            <person name="Ekborg N.A."/>
            <person name="Lamed R."/>
            <person name="Richardson P.M."/>
            <person name="Borovok I."/>
            <person name="Hutcheson S."/>
        </authorList>
    </citation>
    <scope>NUCLEOTIDE SEQUENCE [LARGE SCALE GENOMIC DNA]</scope>
    <source>
        <strain>2-40 / ATCC 43961 / DSM 17024</strain>
    </source>
</reference>
<sequence>MFDQIPTQRPNTPLLDVVDTPARLRELSEKQLPQLAKELREYLLYTVGQTGGHFGAGLGVVELTVALHYVLNTPDDRLVWDVGHQTYPHKILTGRREQMSSIRQLDGLSGFPKRSESEFDTFGVGHSSTSISAALGMALAAEMTDNQQQTVAVIGDGSMTAGMAFEALNHAAHADTNMMVILNDNNMSISKNVGGLANYFSKIWASKTYCALREGSKRVLTKIPQAWELARKTEEHMKGMVSPGTLFEELGFYYVGPIDGHDLERLVHDIRNMLAIPGPKLLHIITQKGKGFTPAEKDPVGYHALNKIEPKASITPISASGGAEAPAASTIKKPKYQTVFGDWLCDLAEVDPFVLGITPAMCDGSGMVEFAERFPDRFHDVAIAEQHAVTLAAGLACEKFKPVVAIYSTFLQRAYDQLVHDVALQNLDVTFAIDRAGLVGEDGPTHAGAFDISFLRCIPKIIIATPSDENECRQLLFSAYHHPGAAAVRYPRGTGPGAVIELENQHWPIGKGRELRQGKTVCFINFGVLLPDAIAVAEANNYGVCDMRWAKPLDKDLLLNMAEQYDYLVTLEENAVAGGAGAGVMELLAAEGISTPVLPLGLPDEYLDHGKRSQLLQAAGLDRASINQRINQWLSRHNGAAHDSQIHSL</sequence>
<dbReference type="EC" id="2.2.1.7" evidence="1"/>
<dbReference type="EMBL" id="CP000282">
    <property type="protein sequence ID" value="ABD82636.1"/>
    <property type="molecule type" value="Genomic_DNA"/>
</dbReference>
<dbReference type="RefSeq" id="WP_011469852.1">
    <property type="nucleotide sequence ID" value="NC_007912.1"/>
</dbReference>
<dbReference type="SMR" id="Q21F93"/>
<dbReference type="STRING" id="203122.Sde_3381"/>
<dbReference type="GeneID" id="98614999"/>
<dbReference type="KEGG" id="sde:Sde_3381"/>
<dbReference type="eggNOG" id="COG1154">
    <property type="taxonomic scope" value="Bacteria"/>
</dbReference>
<dbReference type="HOGENOM" id="CLU_009227_1_4_6"/>
<dbReference type="OrthoDB" id="9803371at2"/>
<dbReference type="UniPathway" id="UPA00064">
    <property type="reaction ID" value="UER00091"/>
</dbReference>
<dbReference type="Proteomes" id="UP000001947">
    <property type="component" value="Chromosome"/>
</dbReference>
<dbReference type="GO" id="GO:0005829">
    <property type="term" value="C:cytosol"/>
    <property type="evidence" value="ECO:0007669"/>
    <property type="project" value="TreeGrafter"/>
</dbReference>
<dbReference type="GO" id="GO:0008661">
    <property type="term" value="F:1-deoxy-D-xylulose-5-phosphate synthase activity"/>
    <property type="evidence" value="ECO:0007669"/>
    <property type="project" value="UniProtKB-UniRule"/>
</dbReference>
<dbReference type="GO" id="GO:0000287">
    <property type="term" value="F:magnesium ion binding"/>
    <property type="evidence" value="ECO:0007669"/>
    <property type="project" value="UniProtKB-UniRule"/>
</dbReference>
<dbReference type="GO" id="GO:0030976">
    <property type="term" value="F:thiamine pyrophosphate binding"/>
    <property type="evidence" value="ECO:0007669"/>
    <property type="project" value="UniProtKB-UniRule"/>
</dbReference>
<dbReference type="GO" id="GO:0052865">
    <property type="term" value="P:1-deoxy-D-xylulose 5-phosphate biosynthetic process"/>
    <property type="evidence" value="ECO:0007669"/>
    <property type="project" value="UniProtKB-UniPathway"/>
</dbReference>
<dbReference type="GO" id="GO:0019288">
    <property type="term" value="P:isopentenyl diphosphate biosynthetic process, methylerythritol 4-phosphate pathway"/>
    <property type="evidence" value="ECO:0007669"/>
    <property type="project" value="TreeGrafter"/>
</dbReference>
<dbReference type="GO" id="GO:0016114">
    <property type="term" value="P:terpenoid biosynthetic process"/>
    <property type="evidence" value="ECO:0007669"/>
    <property type="project" value="UniProtKB-UniRule"/>
</dbReference>
<dbReference type="GO" id="GO:0009228">
    <property type="term" value="P:thiamine biosynthetic process"/>
    <property type="evidence" value="ECO:0007669"/>
    <property type="project" value="UniProtKB-UniRule"/>
</dbReference>
<dbReference type="CDD" id="cd02007">
    <property type="entry name" value="TPP_DXS"/>
    <property type="match status" value="1"/>
</dbReference>
<dbReference type="CDD" id="cd07033">
    <property type="entry name" value="TPP_PYR_DXS_TK_like"/>
    <property type="match status" value="1"/>
</dbReference>
<dbReference type="FunFam" id="3.40.50.920:FF:000002">
    <property type="entry name" value="1-deoxy-D-xylulose-5-phosphate synthase"/>
    <property type="match status" value="1"/>
</dbReference>
<dbReference type="FunFam" id="3.40.50.970:FF:000005">
    <property type="entry name" value="1-deoxy-D-xylulose-5-phosphate synthase"/>
    <property type="match status" value="1"/>
</dbReference>
<dbReference type="Gene3D" id="3.40.50.920">
    <property type="match status" value="1"/>
</dbReference>
<dbReference type="Gene3D" id="3.40.50.970">
    <property type="match status" value="2"/>
</dbReference>
<dbReference type="HAMAP" id="MF_00315">
    <property type="entry name" value="DXP_synth"/>
    <property type="match status" value="1"/>
</dbReference>
<dbReference type="InterPro" id="IPR005477">
    <property type="entry name" value="Dxylulose-5-P_synthase"/>
</dbReference>
<dbReference type="InterPro" id="IPR029061">
    <property type="entry name" value="THDP-binding"/>
</dbReference>
<dbReference type="InterPro" id="IPR009014">
    <property type="entry name" value="Transketo_C/PFOR_II"/>
</dbReference>
<dbReference type="InterPro" id="IPR005475">
    <property type="entry name" value="Transketolase-like_Pyr-bd"/>
</dbReference>
<dbReference type="InterPro" id="IPR020826">
    <property type="entry name" value="Transketolase_BS"/>
</dbReference>
<dbReference type="InterPro" id="IPR033248">
    <property type="entry name" value="Transketolase_C"/>
</dbReference>
<dbReference type="NCBIfam" id="TIGR00204">
    <property type="entry name" value="dxs"/>
    <property type="match status" value="1"/>
</dbReference>
<dbReference type="NCBIfam" id="NF003933">
    <property type="entry name" value="PRK05444.2-2"/>
    <property type="match status" value="1"/>
</dbReference>
<dbReference type="PANTHER" id="PTHR43322">
    <property type="entry name" value="1-D-DEOXYXYLULOSE 5-PHOSPHATE SYNTHASE-RELATED"/>
    <property type="match status" value="1"/>
</dbReference>
<dbReference type="PANTHER" id="PTHR43322:SF5">
    <property type="entry name" value="1-DEOXY-D-XYLULOSE-5-PHOSPHATE SYNTHASE, CHLOROPLASTIC"/>
    <property type="match status" value="1"/>
</dbReference>
<dbReference type="Pfam" id="PF13292">
    <property type="entry name" value="DXP_synthase_N"/>
    <property type="match status" value="1"/>
</dbReference>
<dbReference type="Pfam" id="PF02779">
    <property type="entry name" value="Transket_pyr"/>
    <property type="match status" value="1"/>
</dbReference>
<dbReference type="Pfam" id="PF02780">
    <property type="entry name" value="Transketolase_C"/>
    <property type="match status" value="1"/>
</dbReference>
<dbReference type="SMART" id="SM00861">
    <property type="entry name" value="Transket_pyr"/>
    <property type="match status" value="1"/>
</dbReference>
<dbReference type="SUPFAM" id="SSF52518">
    <property type="entry name" value="Thiamin diphosphate-binding fold (THDP-binding)"/>
    <property type="match status" value="2"/>
</dbReference>
<dbReference type="SUPFAM" id="SSF52922">
    <property type="entry name" value="TK C-terminal domain-like"/>
    <property type="match status" value="1"/>
</dbReference>
<dbReference type="PROSITE" id="PS00802">
    <property type="entry name" value="TRANSKETOLASE_2"/>
    <property type="match status" value="1"/>
</dbReference>
<proteinExistence type="inferred from homology"/>
<keyword id="KW-0414">Isoprene biosynthesis</keyword>
<keyword id="KW-0460">Magnesium</keyword>
<keyword id="KW-0479">Metal-binding</keyword>
<keyword id="KW-1185">Reference proteome</keyword>
<keyword id="KW-0784">Thiamine biosynthesis</keyword>
<keyword id="KW-0786">Thiamine pyrophosphate</keyword>
<keyword id="KW-0808">Transferase</keyword>
<gene>
    <name evidence="1" type="primary">dxs</name>
    <name type="ordered locus">Sde_3381</name>
</gene>
<comment type="function">
    <text evidence="1">Catalyzes the acyloin condensation reaction between C atoms 2 and 3 of pyruvate and glyceraldehyde 3-phosphate to yield 1-deoxy-D-xylulose-5-phosphate (DXP).</text>
</comment>
<comment type="catalytic activity">
    <reaction evidence="1">
        <text>D-glyceraldehyde 3-phosphate + pyruvate + H(+) = 1-deoxy-D-xylulose 5-phosphate + CO2</text>
        <dbReference type="Rhea" id="RHEA:12605"/>
        <dbReference type="ChEBI" id="CHEBI:15361"/>
        <dbReference type="ChEBI" id="CHEBI:15378"/>
        <dbReference type="ChEBI" id="CHEBI:16526"/>
        <dbReference type="ChEBI" id="CHEBI:57792"/>
        <dbReference type="ChEBI" id="CHEBI:59776"/>
        <dbReference type="EC" id="2.2.1.7"/>
    </reaction>
</comment>
<comment type="cofactor">
    <cofactor evidence="1">
        <name>Mg(2+)</name>
        <dbReference type="ChEBI" id="CHEBI:18420"/>
    </cofactor>
    <text evidence="1">Binds 1 Mg(2+) ion per subunit.</text>
</comment>
<comment type="cofactor">
    <cofactor evidence="1">
        <name>thiamine diphosphate</name>
        <dbReference type="ChEBI" id="CHEBI:58937"/>
    </cofactor>
    <text evidence="1">Binds 1 thiamine pyrophosphate per subunit.</text>
</comment>
<comment type="pathway">
    <text evidence="1">Metabolic intermediate biosynthesis; 1-deoxy-D-xylulose 5-phosphate biosynthesis; 1-deoxy-D-xylulose 5-phosphate from D-glyceraldehyde 3-phosphate and pyruvate: step 1/1.</text>
</comment>
<comment type="subunit">
    <text evidence="1">Homodimer.</text>
</comment>
<comment type="similarity">
    <text evidence="1">Belongs to the transketolase family. DXPS subfamily.</text>
</comment>
<protein>
    <recommendedName>
        <fullName evidence="1">1-deoxy-D-xylulose-5-phosphate synthase</fullName>
        <ecNumber evidence="1">2.2.1.7</ecNumber>
    </recommendedName>
    <alternativeName>
        <fullName evidence="1">1-deoxyxylulose-5-phosphate synthase</fullName>
        <shortName evidence="1">DXP synthase</shortName>
        <shortName evidence="1">DXPS</shortName>
    </alternativeName>
</protein>